<gene>
    <name type="primary">PETH</name>
</gene>
<organism>
    <name type="scientific">Pisum sativum</name>
    <name type="common">Garden pea</name>
    <name type="synonym">Lathyrus oleraceus</name>
    <dbReference type="NCBI Taxonomy" id="3888"/>
    <lineage>
        <taxon>Eukaryota</taxon>
        <taxon>Viridiplantae</taxon>
        <taxon>Streptophyta</taxon>
        <taxon>Embryophyta</taxon>
        <taxon>Tracheophyta</taxon>
        <taxon>Spermatophyta</taxon>
        <taxon>Magnoliopsida</taxon>
        <taxon>eudicotyledons</taxon>
        <taxon>Gunneridae</taxon>
        <taxon>Pentapetalae</taxon>
        <taxon>rosids</taxon>
        <taxon>fabids</taxon>
        <taxon>Fabales</taxon>
        <taxon>Fabaceae</taxon>
        <taxon>Papilionoideae</taxon>
        <taxon>50 kb inversion clade</taxon>
        <taxon>NPAAA clade</taxon>
        <taxon>Hologalegina</taxon>
        <taxon>IRL clade</taxon>
        <taxon>Fabeae</taxon>
        <taxon>Pisum</taxon>
    </lineage>
</organism>
<comment type="function">
    <text>May play a key role in regulating the relative amounts of cyclic and non-cyclic electron flow to meet the demands of the plant for ATP and reducing power.</text>
</comment>
<comment type="catalytic activity">
    <reaction>
        <text>2 reduced [2Fe-2S]-[ferredoxin] + NADP(+) + H(+) = 2 oxidized [2Fe-2S]-[ferredoxin] + NADPH</text>
        <dbReference type="Rhea" id="RHEA:20125"/>
        <dbReference type="Rhea" id="RHEA-COMP:10000"/>
        <dbReference type="Rhea" id="RHEA-COMP:10001"/>
        <dbReference type="ChEBI" id="CHEBI:15378"/>
        <dbReference type="ChEBI" id="CHEBI:33737"/>
        <dbReference type="ChEBI" id="CHEBI:33738"/>
        <dbReference type="ChEBI" id="CHEBI:57783"/>
        <dbReference type="ChEBI" id="CHEBI:58349"/>
        <dbReference type="EC" id="1.18.1.2"/>
    </reaction>
</comment>
<comment type="cofactor">
    <cofactor>
        <name>FAD</name>
        <dbReference type="ChEBI" id="CHEBI:57692"/>
    </cofactor>
</comment>
<comment type="pathway">
    <text>Energy metabolism; photosynthesis.</text>
</comment>
<comment type="subunit">
    <text evidence="3 4">Monomer. Interacts with TIC62 (via C-terminus).</text>
</comment>
<comment type="interaction">
    <interactant intactId="EBI-931306">
        <id>P10933</id>
    </interactant>
    <interactant intactId="EBI-931449">
        <id>P09911</id>
        <label>PETF</label>
    </interactant>
    <organismsDiffer>false</organismsDiffer>
    <experiments>3</experiments>
</comment>
<comment type="interaction">
    <interactant intactId="EBI-931306">
        <id>P10933</id>
    </interactant>
    <interactant intactId="EBI-15606082">
        <id>Q8SKU2</id>
        <label>TIC62</label>
    </interactant>
    <organismsDiffer>false</organismsDiffer>
    <experiments>5</experiments>
</comment>
<comment type="subcellular location">
    <subcellularLocation>
        <location>Plastid</location>
        <location>Chloroplast stroma</location>
    </subcellularLocation>
    <subcellularLocation>
        <location evidence="6">Plastid</location>
        <location evidence="6">Chloroplast thylakoid membrane</location>
        <topology evidence="6">Peripheral membrane protein</topology>
        <orientation evidence="6">Stromal side</orientation>
    </subcellularLocation>
    <text>In the vicinity of the photosystem I in the non-stacked and fringe portion of the membrane.</text>
</comment>
<comment type="miscellaneous">
    <text>FNR is probably attached to the membrane by a specific binding protein.</text>
</comment>
<comment type="similarity">
    <text evidence="6">Belongs to the ferredoxin--NADP reductase type 1 family.</text>
</comment>
<keyword id="KW-0002">3D-structure</keyword>
<keyword id="KW-0150">Chloroplast</keyword>
<keyword id="KW-0249">Electron transport</keyword>
<keyword id="KW-0274">FAD</keyword>
<keyword id="KW-0285">Flavoprotein</keyword>
<keyword id="KW-0472">Membrane</keyword>
<keyword id="KW-0521">NADP</keyword>
<keyword id="KW-0560">Oxidoreductase</keyword>
<keyword id="KW-0602">Photosynthesis</keyword>
<keyword id="KW-0934">Plastid</keyword>
<keyword id="KW-0793">Thylakoid</keyword>
<keyword id="KW-0809">Transit peptide</keyword>
<keyword id="KW-0813">Transport</keyword>
<accession>P10933</accession>
<evidence type="ECO:0000250" key="1"/>
<evidence type="ECO:0000255" key="2">
    <source>
        <dbReference type="PROSITE-ProRule" id="PRU00716"/>
    </source>
</evidence>
<evidence type="ECO:0000269" key="3">
    <source>
    </source>
</evidence>
<evidence type="ECO:0000269" key="4">
    <source>
    </source>
</evidence>
<evidence type="ECO:0000269" key="5">
    <source>
    </source>
</evidence>
<evidence type="ECO:0000305" key="6"/>
<evidence type="ECO:0007829" key="7">
    <source>
        <dbReference type="PDB" id="1QFY"/>
    </source>
</evidence>
<evidence type="ECO:0007829" key="8">
    <source>
        <dbReference type="PDB" id="1QFZ"/>
    </source>
</evidence>
<evidence type="ECO:0007829" key="9">
    <source>
        <dbReference type="PDB" id="2XNC"/>
    </source>
</evidence>
<evidence type="ECO:0007829" key="10">
    <source>
        <dbReference type="PDB" id="3MHP"/>
    </source>
</evidence>
<evidence type="ECO:0007829" key="11">
    <source>
        <dbReference type="PDB" id="4AF7"/>
    </source>
</evidence>
<name>FENR1_PEA</name>
<protein>
    <recommendedName>
        <fullName>Ferredoxin--NADP reductase, leaf isozyme, chloroplastic</fullName>
        <shortName>FNR</shortName>
        <ecNumber>1.18.1.2</ecNumber>
    </recommendedName>
</protein>
<dbReference type="EC" id="1.18.1.2"/>
<dbReference type="EMBL" id="X12446">
    <property type="protein sequence ID" value="CAA30978.1"/>
    <property type="molecule type" value="mRNA"/>
</dbReference>
<dbReference type="EMBL" id="L15565">
    <property type="protein sequence ID" value="AAB59349.1"/>
    <property type="molecule type" value="mRNA"/>
</dbReference>
<dbReference type="EMBL" id="L15567">
    <property type="protein sequence ID" value="AAB59303.1"/>
    <property type="molecule type" value="mRNA"/>
</dbReference>
<dbReference type="EMBL" id="L15569">
    <property type="protein sequence ID" value="AAB59304.1"/>
    <property type="molecule type" value="mRNA"/>
</dbReference>
<dbReference type="PIR" id="S04030">
    <property type="entry name" value="S04030"/>
</dbReference>
<dbReference type="PDB" id="1QFY">
    <property type="method" value="X-ray"/>
    <property type="resolution" value="1.80 A"/>
    <property type="chains" value="A/B=53-360"/>
</dbReference>
<dbReference type="PDB" id="1QFZ">
    <property type="method" value="X-ray"/>
    <property type="resolution" value="1.70 A"/>
    <property type="chains" value="A/B=53-360"/>
</dbReference>
<dbReference type="PDB" id="1QG0">
    <property type="method" value="X-ray"/>
    <property type="resolution" value="2.50 A"/>
    <property type="chains" value="A/B=53-360"/>
</dbReference>
<dbReference type="PDB" id="1QGA">
    <property type="method" value="X-ray"/>
    <property type="resolution" value="2.00 A"/>
    <property type="chains" value="A/B=53-360"/>
</dbReference>
<dbReference type="PDB" id="2XNC">
    <property type="method" value="X-ray"/>
    <property type="resolution" value="2.90 A"/>
    <property type="chains" value="A/B=53-360"/>
</dbReference>
<dbReference type="PDB" id="3MHP">
    <property type="method" value="X-ray"/>
    <property type="resolution" value="1.70 A"/>
    <property type="chains" value="A/B=66-360"/>
</dbReference>
<dbReference type="PDB" id="4AF6">
    <property type="method" value="X-ray"/>
    <property type="resolution" value="2.90 A"/>
    <property type="chains" value="A/B=53-360"/>
</dbReference>
<dbReference type="PDB" id="4AF7">
    <property type="method" value="X-ray"/>
    <property type="resolution" value="2.85 A"/>
    <property type="chains" value="A/B=53-360"/>
</dbReference>
<dbReference type="PDBsum" id="1QFY"/>
<dbReference type="PDBsum" id="1QFZ"/>
<dbReference type="PDBsum" id="1QG0"/>
<dbReference type="PDBsum" id="1QGA"/>
<dbReference type="PDBsum" id="2XNC"/>
<dbReference type="PDBsum" id="3MHP"/>
<dbReference type="PDBsum" id="4AF6"/>
<dbReference type="PDBsum" id="4AF7"/>
<dbReference type="SMR" id="P10933"/>
<dbReference type="DIP" id="DIP-35575N"/>
<dbReference type="IntAct" id="P10933">
    <property type="interactions" value="3"/>
</dbReference>
<dbReference type="EnsemblPlants" id="Psat2g154080.2">
    <property type="protein sequence ID" value="Psat2g154080.2.cds"/>
    <property type="gene ID" value="Psat2g154080"/>
</dbReference>
<dbReference type="Gramene" id="Psat2g154080.2">
    <property type="protein sequence ID" value="Psat2g154080.2.cds"/>
    <property type="gene ID" value="Psat2g154080"/>
</dbReference>
<dbReference type="OrthoDB" id="1688044at2759"/>
<dbReference type="BRENDA" id="1.18.1.2">
    <property type="organism ID" value="4872"/>
</dbReference>
<dbReference type="BRENDA" id="1.19.1.1">
    <property type="organism ID" value="4872"/>
</dbReference>
<dbReference type="SABIO-RK" id="P10933"/>
<dbReference type="UniPathway" id="UPA00091"/>
<dbReference type="EvolutionaryTrace" id="P10933"/>
<dbReference type="GO" id="GO:0009570">
    <property type="term" value="C:chloroplast stroma"/>
    <property type="evidence" value="ECO:0007669"/>
    <property type="project" value="UniProtKB-SubCell"/>
</dbReference>
<dbReference type="GO" id="GO:0009535">
    <property type="term" value="C:chloroplast thylakoid membrane"/>
    <property type="evidence" value="ECO:0007669"/>
    <property type="project" value="UniProtKB-SubCell"/>
</dbReference>
<dbReference type="GO" id="GO:0004324">
    <property type="term" value="F:ferredoxin-NADP+ reductase activity"/>
    <property type="evidence" value="ECO:0007669"/>
    <property type="project" value="UniProtKB-EC"/>
</dbReference>
<dbReference type="GO" id="GO:0015979">
    <property type="term" value="P:photosynthesis"/>
    <property type="evidence" value="ECO:0007669"/>
    <property type="project" value="UniProtKB-UniPathway"/>
</dbReference>
<dbReference type="CDD" id="cd06208">
    <property type="entry name" value="CYPOR_like_FNR"/>
    <property type="match status" value="1"/>
</dbReference>
<dbReference type="FunFam" id="2.40.30.10:FF:000048">
    <property type="entry name" value="Ferredoxin--NADP reductase, chloroplastic"/>
    <property type="match status" value="1"/>
</dbReference>
<dbReference type="FunFam" id="3.40.50.80:FF:000008">
    <property type="entry name" value="Ferredoxin--NADP reductase, chloroplastic"/>
    <property type="match status" value="1"/>
</dbReference>
<dbReference type="Gene3D" id="3.40.50.80">
    <property type="entry name" value="Nucleotide-binding domain of ferredoxin-NADP reductase (FNR) module"/>
    <property type="match status" value="1"/>
</dbReference>
<dbReference type="Gene3D" id="2.40.30.10">
    <property type="entry name" value="Translation factors"/>
    <property type="match status" value="1"/>
</dbReference>
<dbReference type="InterPro" id="IPR017927">
    <property type="entry name" value="FAD-bd_FR_type"/>
</dbReference>
<dbReference type="InterPro" id="IPR001709">
    <property type="entry name" value="Flavoprot_Pyr_Nucl_cyt_Rdtase"/>
</dbReference>
<dbReference type="InterPro" id="IPR015701">
    <property type="entry name" value="FNR"/>
</dbReference>
<dbReference type="InterPro" id="IPR039261">
    <property type="entry name" value="FNR_nucleotide-bd"/>
</dbReference>
<dbReference type="InterPro" id="IPR035442">
    <property type="entry name" value="FNR_plant_Cyanobacteria"/>
</dbReference>
<dbReference type="InterPro" id="IPR001433">
    <property type="entry name" value="OxRdtase_FAD/NAD-bd"/>
</dbReference>
<dbReference type="InterPro" id="IPR017938">
    <property type="entry name" value="Riboflavin_synthase-like_b-brl"/>
</dbReference>
<dbReference type="PANTHER" id="PTHR43314">
    <property type="match status" value="1"/>
</dbReference>
<dbReference type="Pfam" id="PF00175">
    <property type="entry name" value="NAD_binding_1"/>
    <property type="match status" value="1"/>
</dbReference>
<dbReference type="PIRSF" id="PIRSF501178">
    <property type="entry name" value="FNR-PetH"/>
    <property type="match status" value="1"/>
</dbReference>
<dbReference type="PIRSF" id="PIRSF000361">
    <property type="entry name" value="Frd-NADP+_RD"/>
    <property type="match status" value="1"/>
</dbReference>
<dbReference type="PRINTS" id="PR00371">
    <property type="entry name" value="FPNCR"/>
</dbReference>
<dbReference type="SUPFAM" id="SSF52343">
    <property type="entry name" value="Ferredoxin reductase-like, C-terminal NADP-linked domain"/>
    <property type="match status" value="1"/>
</dbReference>
<dbReference type="SUPFAM" id="SSF63380">
    <property type="entry name" value="Riboflavin synthase domain-like"/>
    <property type="match status" value="1"/>
</dbReference>
<dbReference type="PROSITE" id="PS51384">
    <property type="entry name" value="FAD_FR"/>
    <property type="match status" value="1"/>
</dbReference>
<reference key="1">
    <citation type="journal article" date="1988" name="Plant Mol. Biol.">
        <title>Characterisation of a full-length cDNA clone for pea ferredoxin-NADP+ reductase.</title>
        <authorList>
            <person name="Newman B.J."/>
            <person name="Gray J.C."/>
        </authorList>
        <dbReference type="AGRICOLA" id="IND92000035"/>
    </citation>
    <scope>NUCLEOTIDE SEQUENCE [MRNA]</scope>
    <source>
        <strain>cv. Little Marvel</strain>
        <tissue>Leaf</tissue>
    </source>
</reference>
<reference key="2">
    <citation type="journal article" date="1993" name="J. Biol. Chem.">
        <title>Probing the role of the carboxyl-terminal region of ferredoxin-NADP+ reductase by site-directed mutagenesis and deletion analysis.</title>
        <authorList>
            <person name="Orellano E.G."/>
            <person name="Calcaterra N.B."/>
            <person name="Carrillo N."/>
            <person name="Ceccarelli E.A."/>
        </authorList>
    </citation>
    <scope>NUCLEOTIDE SEQUENCE [MRNA] OF 270-360</scope>
    <scope>MUTAGENESIS OF TYR-360</scope>
</reference>
<reference key="3">
    <citation type="journal article" date="2002" name="EMBO J.">
        <title>Protein import into chloroplasts involves redox-regulated proteins.</title>
        <authorList>
            <person name="Kuechler M."/>
            <person name="Decker S."/>
            <person name="Hoermann F."/>
            <person name="Soll J."/>
            <person name="Heins L."/>
        </authorList>
    </citation>
    <scope>INTERACTION WITH TIC62</scope>
</reference>
<reference key="4">
    <citation type="journal article" date="1999" name="Nat. Struct. Biol.">
        <title>A productive NADP+ binding mode of ferredoxin-NADP + reductase revealed by protein engineering and crystallographic studies.</title>
        <authorList>
            <person name="Deng Z."/>
            <person name="Aliverti A."/>
            <person name="Zanetti G."/>
            <person name="Arakaki A.K."/>
            <person name="Ottado J."/>
            <person name="Orellano E.G."/>
            <person name="Calcaterra N.B."/>
            <person name="Ceccarelli E.A."/>
            <person name="Carrillo N."/>
            <person name="Karplus P.A."/>
        </authorList>
    </citation>
    <scope>X-RAY CRYSTALLOGRAPHY (1.7 ANGSTROMS) IN COMPLEX WITH FAD AND NADP</scope>
</reference>
<proteinExistence type="evidence at protein level"/>
<feature type="transit peptide" description="Chloroplast">
    <location>
        <begin position="1"/>
        <end position="52"/>
    </location>
</feature>
<feature type="chain" id="PRO_0000019411" description="Ferredoxin--NADP reductase, leaf isozyme, chloroplastic">
    <location>
        <begin position="53"/>
        <end position="360"/>
    </location>
</feature>
<feature type="domain" description="FAD-binding FR-type" evidence="2">
    <location>
        <begin position="81"/>
        <end position="203"/>
    </location>
</feature>
<feature type="binding site" evidence="3">
    <location>
        <begin position="139"/>
        <end position="142"/>
    </location>
    <ligand>
        <name>FAD</name>
        <dbReference type="ChEBI" id="CHEBI:57692"/>
    </ligand>
</feature>
<feature type="binding site" evidence="3">
    <location>
        <position position="142"/>
    </location>
    <ligand>
        <name>NADP(+)</name>
        <dbReference type="ChEBI" id="CHEBI:58349"/>
    </ligand>
</feature>
<feature type="binding site" evidence="3">
    <location>
        <begin position="160"/>
        <end position="162"/>
    </location>
    <ligand>
        <name>FAD</name>
        <dbReference type="ChEBI" id="CHEBI:57692"/>
    </ligand>
</feature>
<feature type="binding site" evidence="3">
    <location>
        <position position="162"/>
    </location>
    <ligand>
        <name>NADP(+)</name>
        <dbReference type="ChEBI" id="CHEBI:58349"/>
    </ligand>
</feature>
<feature type="binding site" evidence="3">
    <location>
        <position position="166"/>
    </location>
    <ligand>
        <name>FAD</name>
        <dbReference type="ChEBI" id="CHEBI:57692"/>
    </ligand>
</feature>
<feature type="binding site" evidence="3">
    <location>
        <begin position="177"/>
        <end position="179"/>
    </location>
    <ligand>
        <name>FAD</name>
        <dbReference type="ChEBI" id="CHEBI:57692"/>
    </ligand>
</feature>
<feature type="binding site" evidence="1">
    <location>
        <position position="218"/>
    </location>
    <ligand>
        <name>FAD</name>
        <dbReference type="ChEBI" id="CHEBI:57692"/>
    </ligand>
</feature>
<feature type="binding site" evidence="3">
    <location>
        <position position="218"/>
    </location>
    <ligand>
        <name>NADP(+)</name>
        <dbReference type="ChEBI" id="CHEBI:58349"/>
    </ligand>
</feature>
<feature type="binding site" evidence="3">
    <location>
        <begin position="250"/>
        <end position="251"/>
    </location>
    <ligand>
        <name>NADP(+)</name>
        <dbReference type="ChEBI" id="CHEBI:58349"/>
    </ligand>
</feature>
<feature type="binding site" evidence="3">
    <location>
        <begin position="280"/>
        <end position="281"/>
    </location>
    <ligand>
        <name>NADP(+)</name>
        <dbReference type="ChEBI" id="CHEBI:58349"/>
    </ligand>
</feature>
<feature type="binding site" evidence="3">
    <location>
        <position position="290"/>
    </location>
    <ligand>
        <name>NADP(+)</name>
        <dbReference type="ChEBI" id="CHEBI:58349"/>
    </ligand>
</feature>
<feature type="binding site" evidence="3">
    <location>
        <begin position="319"/>
        <end position="320"/>
    </location>
    <ligand>
        <name>NADP(+)</name>
        <dbReference type="ChEBI" id="CHEBI:58349"/>
    </ligand>
</feature>
<feature type="binding site" evidence="3">
    <location>
        <position position="358"/>
    </location>
    <ligand>
        <name>NADP(+)</name>
        <dbReference type="ChEBI" id="CHEBI:58349"/>
    </ligand>
</feature>
<feature type="mutagenesis site" description="Results in a 2.0-fold reduction in kcat for the diaphorase reaction." evidence="5">
    <original>Y</original>
    <variation>F</variation>
    <location>
        <position position="360"/>
    </location>
</feature>
<feature type="mutagenesis site" description="Results in a 302-fold reduction in kcat for the diaphorase reaction." evidence="5">
    <original>Y</original>
    <variation>G</variation>
    <location>
        <position position="360"/>
    </location>
</feature>
<feature type="mutagenesis site" description="Results in a 22-fold reduction in kcat for the diaphorase reaction." evidence="5">
    <original>Y</original>
    <variation>S</variation>
    <location>
        <position position="360"/>
    </location>
</feature>
<feature type="mutagenesis site" description="Results in a 2.2-fold reduction in kcat for the diaphorase reaction." evidence="5">
    <original>Y</original>
    <variation>W</variation>
    <location>
        <position position="360"/>
    </location>
</feature>
<feature type="strand" evidence="7">
    <location>
        <begin position="67"/>
        <end position="69"/>
    </location>
</feature>
<feature type="strand" evidence="10">
    <location>
        <begin position="77"/>
        <end position="79"/>
    </location>
</feature>
<feature type="strand" evidence="9">
    <location>
        <begin position="80"/>
        <end position="82"/>
    </location>
</feature>
<feature type="strand" evidence="8">
    <location>
        <begin position="84"/>
        <end position="93"/>
    </location>
</feature>
<feature type="strand" evidence="8">
    <location>
        <begin position="99"/>
        <end position="101"/>
    </location>
</feature>
<feature type="strand" evidence="8">
    <location>
        <begin position="103"/>
        <end position="109"/>
    </location>
</feature>
<feature type="strand" evidence="8">
    <location>
        <begin position="121"/>
        <end position="125"/>
    </location>
</feature>
<feature type="strand" evidence="8">
    <location>
        <begin position="127"/>
        <end position="129"/>
    </location>
</feature>
<feature type="strand" evidence="10">
    <location>
        <begin position="133"/>
        <end position="135"/>
    </location>
</feature>
<feature type="strand" evidence="8">
    <location>
        <begin position="139"/>
        <end position="143"/>
    </location>
</feature>
<feature type="strand" evidence="8">
    <location>
        <begin position="152"/>
        <end position="154"/>
    </location>
</feature>
<feature type="strand" evidence="8">
    <location>
        <begin position="156"/>
        <end position="162"/>
    </location>
</feature>
<feature type="strand" evidence="8">
    <location>
        <begin position="165"/>
        <end position="167"/>
    </location>
</feature>
<feature type="strand" evidence="8">
    <location>
        <begin position="173"/>
        <end position="175"/>
    </location>
</feature>
<feature type="helix" evidence="8">
    <location>
        <begin position="177"/>
        <end position="184"/>
    </location>
</feature>
<feature type="strand" evidence="8">
    <location>
        <begin position="190"/>
        <end position="197"/>
    </location>
</feature>
<feature type="strand" evidence="11">
    <location>
        <begin position="199"/>
        <end position="201"/>
    </location>
</feature>
<feature type="strand" evidence="8">
    <location>
        <begin position="210"/>
        <end position="216"/>
    </location>
</feature>
<feature type="helix" evidence="8">
    <location>
        <begin position="217"/>
        <end position="220"/>
    </location>
</feature>
<feature type="helix" evidence="8">
    <location>
        <begin position="221"/>
        <end position="231"/>
    </location>
</feature>
<feature type="strand" evidence="8">
    <location>
        <begin position="242"/>
        <end position="252"/>
    </location>
</feature>
<feature type="helix" evidence="8">
    <location>
        <begin position="253"/>
        <end position="255"/>
    </location>
</feature>
<feature type="helix" evidence="8">
    <location>
        <begin position="259"/>
        <end position="268"/>
    </location>
</feature>
<feature type="turn" evidence="8">
    <location>
        <begin position="270"/>
        <end position="272"/>
    </location>
</feature>
<feature type="strand" evidence="8">
    <location>
        <begin position="273"/>
        <end position="279"/>
    </location>
</feature>
<feature type="turn" evidence="8">
    <location>
        <begin position="280"/>
        <end position="282"/>
    </location>
</feature>
<feature type="helix" evidence="8">
    <location>
        <begin position="293"/>
        <end position="297"/>
    </location>
</feature>
<feature type="helix" evidence="8">
    <location>
        <begin position="298"/>
        <end position="300"/>
    </location>
</feature>
<feature type="helix" evidence="8">
    <location>
        <begin position="301"/>
        <end position="309"/>
    </location>
</feature>
<feature type="strand" evidence="8">
    <location>
        <begin position="313"/>
        <end position="320"/>
    </location>
</feature>
<feature type="helix" evidence="8">
    <location>
        <begin position="323"/>
        <end position="337"/>
    </location>
</feature>
<feature type="helix" evidence="8">
    <location>
        <begin position="342"/>
        <end position="351"/>
    </location>
</feature>
<feature type="strand" evidence="8">
    <location>
        <begin position="355"/>
        <end position="360"/>
    </location>
</feature>
<sequence length="360" mass="40194">MAAAVTAAVSLPYSNSTSLPIRTSIVAPERLVFKKVSLNNVSISGRVGTIRAQVTTEAPAKVVKHSKKQDENIVVNKFKPKEPYVGRCLLNTKITGDDAPGETWHMVFSTEGEVPYREGQSIGIVPDGIDKNGKPHKLRLYSIASSAIGDFGDSKTVSLCVKRLVYTNDAGEVVKGVCSNFLCDLKPGSEVKITGPVGKEMLMPKDPNATVIMLGTGTGIAPFRSFLWKMFFEKHEDYQFNGLAWLFLGVPTSSSLLYKEEFEKMKEKAPENFRLDFAVSREQVNDKGEKMYIQTRMAQYAEELWELLKKDNTFVYMCGLKGMEKGIDDIMVSLAAKDGIDWIEYKRTLKKAEQWNVEVY</sequence>